<keyword id="KW-0025">Alternative splicing</keyword>
<keyword id="KW-0164">Citrullination</keyword>
<keyword id="KW-0175">Coiled coil</keyword>
<keyword id="KW-1017">Isopeptide bond</keyword>
<keyword id="KW-0539">Nucleus</keyword>
<keyword id="KW-0597">Phosphoprotein</keyword>
<keyword id="KW-1185">Reference proteome</keyword>
<keyword id="KW-0690">Ribosome biogenesis</keyword>
<keyword id="KW-0832">Ubl conjugation</keyword>
<name>UT14A_MOUSE</name>
<protein>
    <recommendedName>
        <fullName>U3 small nucleolar RNA-associated protein 14 homolog A</fullName>
    </recommendedName>
    <alternativeName>
        <fullName>Juvenile spermatogonial depletion-like X-linked protein</fullName>
        <shortName>Jsd-like X-linked protein</shortName>
    </alternativeName>
</protein>
<comment type="function">
    <text evidence="1">May be required for ribosome biogenesis.</text>
</comment>
<comment type="subunit">
    <text evidence="2">Interacts with DHX37.</text>
</comment>
<comment type="subcellular location">
    <subcellularLocation>
        <location evidence="1">Nucleus</location>
        <location evidence="1">Nucleolus</location>
    </subcellularLocation>
</comment>
<comment type="alternative products">
    <event type="alternative splicing"/>
    <isoform>
        <id>Q640M1-1</id>
        <name>1</name>
        <sequence type="displayed"/>
    </isoform>
    <isoform>
        <id>Q640M1-2</id>
        <name>2</name>
        <sequence type="described" ref="VSP_014477 VSP_014478"/>
    </isoform>
</comment>
<comment type="tissue specificity">
    <text evidence="5">Ubiquitously expressed.</text>
</comment>
<comment type="PTM">
    <text evidence="6">Citrullinated by PADI4.</text>
</comment>
<comment type="miscellaneous">
    <text>The mouse genome also contains the Utp14b gene, an autosomal retrotransposed copy of this X-linked gene. Evolution of autosomal retrogenes from X-linked progenitors compensates for X-chromosome silencing during male meiosis.</text>
</comment>
<comment type="similarity">
    <text evidence="8">Belongs to the UTP14 family.</text>
</comment>
<comment type="sequence caution" evidence="8">
    <conflict type="miscellaneous discrepancy">
        <sequence resource="EMBL-CDS" id="AAH62165"/>
    </conflict>
    <text>Contaminating sequence. Potential poly-A sequence.</text>
</comment>
<comment type="sequence caution" evidence="8">
    <conflict type="frameshift">
        <sequence resource="EMBL-CDS" id="AAQ87011"/>
    </conflict>
</comment>
<comment type="sequence caution" evidence="8">
    <conflict type="erroneous initiation">
        <sequence resource="EMBL-CDS" id="BAD32202"/>
    </conflict>
</comment>
<reference key="1">
    <citation type="journal article" date="2004" name="Nat. Genet.">
        <title>An X-to-autosome retrogene is required for spermatogenesis in mice.</title>
        <authorList>
            <person name="Bradley J."/>
            <person name="Baltus A."/>
            <person name="Skaletsky H."/>
            <person name="Royce-Tolland M."/>
            <person name="Dewar K."/>
            <person name="Page D.C."/>
        </authorList>
    </citation>
    <scope>NUCLEOTIDE SEQUENCE [MRNA] (ISOFORM 1)</scope>
</reference>
<reference key="2">
    <citation type="journal article" date="2004" name="DNA Res.">
        <title>Prediction of the coding sequences of mouse homologues of KIAA gene: IV. The complete nucleotide sequences of 500 mouse KIAA-homologous cDNAs identified by screening of terminal sequences of cDNA clones randomly sampled from size-fractionated libraries.</title>
        <authorList>
            <person name="Okazaki N."/>
            <person name="Kikuno R."/>
            <person name="Ohara R."/>
            <person name="Inamoto S."/>
            <person name="Koseki H."/>
            <person name="Hiraoka S."/>
            <person name="Saga Y."/>
            <person name="Seino S."/>
            <person name="Nishimura M."/>
            <person name="Kaisho T."/>
            <person name="Hoshino K."/>
            <person name="Kitamura H."/>
            <person name="Nagase T."/>
            <person name="Ohara O."/>
            <person name="Koga H."/>
        </authorList>
    </citation>
    <scope>NUCLEOTIDE SEQUENCE [LARGE SCALE MRNA] (ISOFORM 1)</scope>
    <source>
        <tissue>Thymus</tissue>
    </source>
</reference>
<reference key="3">
    <citation type="journal article" date="2005" name="Science">
        <title>The transcriptional landscape of the mammalian genome.</title>
        <authorList>
            <person name="Carninci P."/>
            <person name="Kasukawa T."/>
            <person name="Katayama S."/>
            <person name="Gough J."/>
            <person name="Frith M.C."/>
            <person name="Maeda N."/>
            <person name="Oyama R."/>
            <person name="Ravasi T."/>
            <person name="Lenhard B."/>
            <person name="Wells C."/>
            <person name="Kodzius R."/>
            <person name="Shimokawa K."/>
            <person name="Bajic V.B."/>
            <person name="Brenner S.E."/>
            <person name="Batalov S."/>
            <person name="Forrest A.R."/>
            <person name="Zavolan M."/>
            <person name="Davis M.J."/>
            <person name="Wilming L.G."/>
            <person name="Aidinis V."/>
            <person name="Allen J.E."/>
            <person name="Ambesi-Impiombato A."/>
            <person name="Apweiler R."/>
            <person name="Aturaliya R.N."/>
            <person name="Bailey T.L."/>
            <person name="Bansal M."/>
            <person name="Baxter L."/>
            <person name="Beisel K.W."/>
            <person name="Bersano T."/>
            <person name="Bono H."/>
            <person name="Chalk A.M."/>
            <person name="Chiu K.P."/>
            <person name="Choudhary V."/>
            <person name="Christoffels A."/>
            <person name="Clutterbuck D.R."/>
            <person name="Crowe M.L."/>
            <person name="Dalla E."/>
            <person name="Dalrymple B.P."/>
            <person name="de Bono B."/>
            <person name="Della Gatta G."/>
            <person name="di Bernardo D."/>
            <person name="Down T."/>
            <person name="Engstrom P."/>
            <person name="Fagiolini M."/>
            <person name="Faulkner G."/>
            <person name="Fletcher C.F."/>
            <person name="Fukushima T."/>
            <person name="Furuno M."/>
            <person name="Futaki S."/>
            <person name="Gariboldi M."/>
            <person name="Georgii-Hemming P."/>
            <person name="Gingeras T.R."/>
            <person name="Gojobori T."/>
            <person name="Green R.E."/>
            <person name="Gustincich S."/>
            <person name="Harbers M."/>
            <person name="Hayashi Y."/>
            <person name="Hensch T.K."/>
            <person name="Hirokawa N."/>
            <person name="Hill D."/>
            <person name="Huminiecki L."/>
            <person name="Iacono M."/>
            <person name="Ikeo K."/>
            <person name="Iwama A."/>
            <person name="Ishikawa T."/>
            <person name="Jakt M."/>
            <person name="Kanapin A."/>
            <person name="Katoh M."/>
            <person name="Kawasawa Y."/>
            <person name="Kelso J."/>
            <person name="Kitamura H."/>
            <person name="Kitano H."/>
            <person name="Kollias G."/>
            <person name="Krishnan S.P."/>
            <person name="Kruger A."/>
            <person name="Kummerfeld S.K."/>
            <person name="Kurochkin I.V."/>
            <person name="Lareau L.F."/>
            <person name="Lazarevic D."/>
            <person name="Lipovich L."/>
            <person name="Liu J."/>
            <person name="Liuni S."/>
            <person name="McWilliam S."/>
            <person name="Madan Babu M."/>
            <person name="Madera M."/>
            <person name="Marchionni L."/>
            <person name="Matsuda H."/>
            <person name="Matsuzawa S."/>
            <person name="Miki H."/>
            <person name="Mignone F."/>
            <person name="Miyake S."/>
            <person name="Morris K."/>
            <person name="Mottagui-Tabar S."/>
            <person name="Mulder N."/>
            <person name="Nakano N."/>
            <person name="Nakauchi H."/>
            <person name="Ng P."/>
            <person name="Nilsson R."/>
            <person name="Nishiguchi S."/>
            <person name="Nishikawa S."/>
            <person name="Nori F."/>
            <person name="Ohara O."/>
            <person name="Okazaki Y."/>
            <person name="Orlando V."/>
            <person name="Pang K.C."/>
            <person name="Pavan W.J."/>
            <person name="Pavesi G."/>
            <person name="Pesole G."/>
            <person name="Petrovsky N."/>
            <person name="Piazza S."/>
            <person name="Reed J."/>
            <person name="Reid J.F."/>
            <person name="Ring B.Z."/>
            <person name="Ringwald M."/>
            <person name="Rost B."/>
            <person name="Ruan Y."/>
            <person name="Salzberg S.L."/>
            <person name="Sandelin A."/>
            <person name="Schneider C."/>
            <person name="Schoenbach C."/>
            <person name="Sekiguchi K."/>
            <person name="Semple C.A."/>
            <person name="Seno S."/>
            <person name="Sessa L."/>
            <person name="Sheng Y."/>
            <person name="Shibata Y."/>
            <person name="Shimada H."/>
            <person name="Shimada K."/>
            <person name="Silva D."/>
            <person name="Sinclair B."/>
            <person name="Sperling S."/>
            <person name="Stupka E."/>
            <person name="Sugiura K."/>
            <person name="Sultana R."/>
            <person name="Takenaka Y."/>
            <person name="Taki K."/>
            <person name="Tammoja K."/>
            <person name="Tan S.L."/>
            <person name="Tang S."/>
            <person name="Taylor M.S."/>
            <person name="Tegner J."/>
            <person name="Teichmann S.A."/>
            <person name="Ueda H.R."/>
            <person name="van Nimwegen E."/>
            <person name="Verardo R."/>
            <person name="Wei C.L."/>
            <person name="Yagi K."/>
            <person name="Yamanishi H."/>
            <person name="Zabarovsky E."/>
            <person name="Zhu S."/>
            <person name="Zimmer A."/>
            <person name="Hide W."/>
            <person name="Bult C."/>
            <person name="Grimmond S.M."/>
            <person name="Teasdale R.D."/>
            <person name="Liu E.T."/>
            <person name="Brusic V."/>
            <person name="Quackenbush J."/>
            <person name="Wahlestedt C."/>
            <person name="Mattick J.S."/>
            <person name="Hume D.A."/>
            <person name="Kai C."/>
            <person name="Sasaki D."/>
            <person name="Tomaru Y."/>
            <person name="Fukuda S."/>
            <person name="Kanamori-Katayama M."/>
            <person name="Suzuki M."/>
            <person name="Aoki J."/>
            <person name="Arakawa T."/>
            <person name="Iida J."/>
            <person name="Imamura K."/>
            <person name="Itoh M."/>
            <person name="Kato T."/>
            <person name="Kawaji H."/>
            <person name="Kawagashira N."/>
            <person name="Kawashima T."/>
            <person name="Kojima M."/>
            <person name="Kondo S."/>
            <person name="Konno H."/>
            <person name="Nakano K."/>
            <person name="Ninomiya N."/>
            <person name="Nishio T."/>
            <person name="Okada M."/>
            <person name="Plessy C."/>
            <person name="Shibata K."/>
            <person name="Shiraki T."/>
            <person name="Suzuki S."/>
            <person name="Tagami M."/>
            <person name="Waki K."/>
            <person name="Watahiki A."/>
            <person name="Okamura-Oho Y."/>
            <person name="Suzuki H."/>
            <person name="Kawai J."/>
            <person name="Hayashizaki Y."/>
        </authorList>
    </citation>
    <scope>NUCLEOTIDE SEQUENCE [LARGE SCALE MRNA] (ISOFORM 2)</scope>
    <source>
        <strain>C57BL/6J</strain>
        <tissue>Embryo</tissue>
    </source>
</reference>
<reference key="4">
    <citation type="journal article" date="2009" name="PLoS Biol.">
        <title>Lineage-specific biology revealed by a finished genome assembly of the mouse.</title>
        <authorList>
            <person name="Church D.M."/>
            <person name="Goodstadt L."/>
            <person name="Hillier L.W."/>
            <person name="Zody M.C."/>
            <person name="Goldstein S."/>
            <person name="She X."/>
            <person name="Bult C.J."/>
            <person name="Agarwala R."/>
            <person name="Cherry J.L."/>
            <person name="DiCuccio M."/>
            <person name="Hlavina W."/>
            <person name="Kapustin Y."/>
            <person name="Meric P."/>
            <person name="Maglott D."/>
            <person name="Birtle Z."/>
            <person name="Marques A.C."/>
            <person name="Graves T."/>
            <person name="Zhou S."/>
            <person name="Teague B."/>
            <person name="Potamousis K."/>
            <person name="Churas C."/>
            <person name="Place M."/>
            <person name="Herschleb J."/>
            <person name="Runnheim R."/>
            <person name="Forrest D."/>
            <person name="Amos-Landgraf J."/>
            <person name="Schwartz D.C."/>
            <person name="Cheng Z."/>
            <person name="Lindblad-Toh K."/>
            <person name="Eichler E.E."/>
            <person name="Ponting C.P."/>
        </authorList>
    </citation>
    <scope>NUCLEOTIDE SEQUENCE [LARGE SCALE GENOMIC DNA]</scope>
    <source>
        <strain>C57BL/6J</strain>
    </source>
</reference>
<reference key="5">
    <citation type="journal article" date="2004" name="Genome Res.">
        <title>The status, quality, and expansion of the NIH full-length cDNA project: the Mammalian Gene Collection (MGC).</title>
        <authorList>
            <consortium name="The MGC Project Team"/>
        </authorList>
    </citation>
    <scope>NUCLEOTIDE SEQUENCE [LARGE SCALE MRNA] (ISOFORM 1)</scope>
    <source>
        <strain>C57BL/6J</strain>
        <tissue>Brain</tissue>
        <tissue>Jaw</tissue>
    </source>
</reference>
<reference key="6">
    <citation type="journal article" date="2004" name="Proc. Natl. Acad. Sci. U.S.A.">
        <title>The mouse juvenile spermatogonial depletion (jsd) phenotype is due to a mutation in the X-derived retrogene, mUtp14b.</title>
        <authorList>
            <person name="Rohozinski J."/>
            <person name="Bishop C.E."/>
        </authorList>
    </citation>
    <scope>TISSUE SPECIFICITY</scope>
</reference>
<reference key="7">
    <citation type="journal article" date="2010" name="Cell">
        <title>A tissue-specific atlas of mouse protein phosphorylation and expression.</title>
        <authorList>
            <person name="Huttlin E.L."/>
            <person name="Jedrychowski M.P."/>
            <person name="Elias J.E."/>
            <person name="Goswami T."/>
            <person name="Rad R."/>
            <person name="Beausoleil S.A."/>
            <person name="Villen J."/>
            <person name="Haas W."/>
            <person name="Sowa M.E."/>
            <person name="Gygi S.P."/>
        </authorList>
    </citation>
    <scope>PHOSPHORYLATION [LARGE SCALE ANALYSIS] AT SER-29; SER-31 AND SER-37</scope>
    <scope>IDENTIFICATION BY MASS SPECTROMETRY [LARGE SCALE ANALYSIS]</scope>
    <source>
        <tissue>Spleen</tissue>
        <tissue>Testis</tissue>
    </source>
</reference>
<reference key="8">
    <citation type="journal article" date="2014" name="Nature">
        <title>Citrullination regulates pluripotency and histone H1 binding to chromatin.</title>
        <authorList>
            <person name="Christophorou M.A."/>
            <person name="Castelo-Branco G."/>
            <person name="Halley-Stott R.P."/>
            <person name="Oliveira C.S."/>
            <person name="Loos R."/>
            <person name="Radzisheuskaya A."/>
            <person name="Mowen K.A."/>
            <person name="Bertone P."/>
            <person name="Silva J.C."/>
            <person name="Zernicka-Goetz M."/>
            <person name="Nielsen M.L."/>
            <person name="Gurdon J.B."/>
            <person name="Kouzarides T."/>
        </authorList>
    </citation>
    <scope>CITRULLINATION AT ARG-431 AND ARG-586</scope>
</reference>
<dbReference type="EMBL" id="AY316163">
    <property type="protein sequence ID" value="AAQ87011.1"/>
    <property type="status" value="ALT_FRAME"/>
    <property type="molecule type" value="mRNA"/>
</dbReference>
<dbReference type="EMBL" id="AK172924">
    <property type="protein sequence ID" value="BAD32202.1"/>
    <property type="status" value="ALT_INIT"/>
    <property type="molecule type" value="mRNA"/>
</dbReference>
<dbReference type="EMBL" id="AK012492">
    <property type="protein sequence ID" value="BAB28277.1"/>
    <property type="molecule type" value="mRNA"/>
</dbReference>
<dbReference type="EMBL" id="AL672246">
    <property type="status" value="NOT_ANNOTATED_CDS"/>
    <property type="molecule type" value="Genomic_DNA"/>
</dbReference>
<dbReference type="EMBL" id="BC062165">
    <property type="protein sequence ID" value="AAH62165.1"/>
    <property type="status" value="ALT_SEQ"/>
    <property type="molecule type" value="mRNA"/>
</dbReference>
<dbReference type="EMBL" id="BC082590">
    <property type="protein sequence ID" value="AAH82590.1"/>
    <property type="molecule type" value="mRNA"/>
</dbReference>
<dbReference type="CCDS" id="CCDS30107.1">
    <molecule id="Q640M1-1"/>
</dbReference>
<dbReference type="RefSeq" id="NP_082552.1">
    <molecule id="Q640M1-1"/>
    <property type="nucleotide sequence ID" value="NM_028276.1"/>
</dbReference>
<dbReference type="SMR" id="Q640M1"/>
<dbReference type="BioGRID" id="215433">
    <property type="interactions" value="6"/>
</dbReference>
<dbReference type="FunCoup" id="Q640M1">
    <property type="interactions" value="1563"/>
</dbReference>
<dbReference type="STRING" id="10090.ENSMUSP00000079538"/>
<dbReference type="GlyGen" id="Q640M1">
    <property type="glycosylation" value="1 site, 1 O-linked glycan (1 site)"/>
</dbReference>
<dbReference type="iPTMnet" id="Q640M1"/>
<dbReference type="PhosphoSitePlus" id="Q640M1"/>
<dbReference type="jPOST" id="Q640M1"/>
<dbReference type="PaxDb" id="10090-ENSMUSP00000079538"/>
<dbReference type="PeptideAtlas" id="Q640M1"/>
<dbReference type="ProteomicsDB" id="298256">
    <molecule id="Q640M1-1"/>
</dbReference>
<dbReference type="ProteomicsDB" id="298257">
    <molecule id="Q640M1-2"/>
</dbReference>
<dbReference type="Pumba" id="Q640M1"/>
<dbReference type="DNASU" id="72554"/>
<dbReference type="Ensembl" id="ENSMUST00000080713.5">
    <molecule id="Q640M1-1"/>
    <property type="protein sequence ID" value="ENSMUSP00000079538.5"/>
    <property type="gene ID" value="ENSMUSG00000063785.13"/>
</dbReference>
<dbReference type="GeneID" id="72554"/>
<dbReference type="KEGG" id="mmu:72554"/>
<dbReference type="UCSC" id="uc009tca.1">
    <molecule id="Q640M1-2"/>
    <property type="organism name" value="mouse"/>
</dbReference>
<dbReference type="UCSC" id="uc009tcb.1">
    <molecule id="Q640M1-1"/>
    <property type="organism name" value="mouse"/>
</dbReference>
<dbReference type="AGR" id="MGI:1919804"/>
<dbReference type="CTD" id="10813"/>
<dbReference type="MGI" id="MGI:1919804">
    <property type="gene designation" value="Utp14a"/>
</dbReference>
<dbReference type="VEuPathDB" id="HostDB:ENSMUSG00000063785"/>
<dbReference type="eggNOG" id="KOG2172">
    <property type="taxonomic scope" value="Eukaryota"/>
</dbReference>
<dbReference type="GeneTree" id="ENSGT00390000008142"/>
<dbReference type="HOGENOM" id="CLU_012635_1_0_1"/>
<dbReference type="InParanoid" id="Q640M1"/>
<dbReference type="OMA" id="QVIEPMD"/>
<dbReference type="OrthoDB" id="277439at2759"/>
<dbReference type="PhylomeDB" id="Q640M1"/>
<dbReference type="TreeFam" id="TF314531"/>
<dbReference type="Reactome" id="R-MMU-6791226">
    <property type="pathway name" value="Major pathway of rRNA processing in the nucleolus and cytosol"/>
</dbReference>
<dbReference type="BioGRID-ORCS" id="72554">
    <property type="hits" value="6 hits in 76 CRISPR screens"/>
</dbReference>
<dbReference type="ChiTaRS" id="Utp14a">
    <property type="organism name" value="mouse"/>
</dbReference>
<dbReference type="PRO" id="PR:Q640M1"/>
<dbReference type="Proteomes" id="UP000000589">
    <property type="component" value="Chromosome X"/>
</dbReference>
<dbReference type="RNAct" id="Q640M1">
    <property type="molecule type" value="protein"/>
</dbReference>
<dbReference type="Bgee" id="ENSMUSG00000063785">
    <property type="expression patterns" value="Expressed in undifferentiated genital tubercle and 233 other cell types or tissues"/>
</dbReference>
<dbReference type="GO" id="GO:0005730">
    <property type="term" value="C:nucleolus"/>
    <property type="evidence" value="ECO:0007669"/>
    <property type="project" value="UniProtKB-SubCell"/>
</dbReference>
<dbReference type="GO" id="GO:0032040">
    <property type="term" value="C:small-subunit processome"/>
    <property type="evidence" value="ECO:0007669"/>
    <property type="project" value="InterPro"/>
</dbReference>
<dbReference type="GO" id="GO:0006364">
    <property type="term" value="P:rRNA processing"/>
    <property type="evidence" value="ECO:0007669"/>
    <property type="project" value="InterPro"/>
</dbReference>
<dbReference type="InterPro" id="IPR006709">
    <property type="entry name" value="SSU_processome_Utp14"/>
</dbReference>
<dbReference type="PANTHER" id="PTHR14150">
    <property type="entry name" value="U3 SMALL NUCLEOLAR RNA-ASSOCIATED PROTEIN 14"/>
    <property type="match status" value="1"/>
</dbReference>
<dbReference type="PANTHER" id="PTHR14150:SF21">
    <property type="entry name" value="U3 SMALL NUCLEOLAR RNA-ASSOCIATED PROTEIN 14 HOMOLOG A"/>
    <property type="match status" value="1"/>
</dbReference>
<dbReference type="Pfam" id="PF04615">
    <property type="entry name" value="Utp14"/>
    <property type="match status" value="1"/>
</dbReference>
<evidence type="ECO:0000250" key="1"/>
<evidence type="ECO:0000250" key="2">
    <source>
        <dbReference type="UniProtKB" id="Q9BVJ6"/>
    </source>
</evidence>
<evidence type="ECO:0000255" key="3"/>
<evidence type="ECO:0000256" key="4">
    <source>
        <dbReference type="SAM" id="MobiDB-lite"/>
    </source>
</evidence>
<evidence type="ECO:0000269" key="5">
    <source>
    </source>
</evidence>
<evidence type="ECO:0000269" key="6">
    <source>
    </source>
</evidence>
<evidence type="ECO:0000303" key="7">
    <source>
    </source>
</evidence>
<evidence type="ECO:0000305" key="8"/>
<evidence type="ECO:0007744" key="9">
    <source>
    </source>
</evidence>
<feature type="chain" id="PRO_0000065734" description="U3 small nucleolar RNA-associated protein 14 homolog A">
    <location>
        <begin position="1"/>
        <end position="767"/>
    </location>
</feature>
<feature type="region of interest" description="Disordered" evidence="4">
    <location>
        <begin position="23"/>
        <end position="49"/>
    </location>
</feature>
<feature type="region of interest" description="Disordered" evidence="4">
    <location>
        <begin position="338"/>
        <end position="554"/>
    </location>
</feature>
<feature type="region of interest" description="Disordered" evidence="4">
    <location>
        <begin position="730"/>
        <end position="767"/>
    </location>
</feature>
<feature type="coiled-coil region" evidence="3">
    <location>
        <begin position="317"/>
        <end position="346"/>
    </location>
</feature>
<feature type="compositionally biased region" description="Acidic residues" evidence="4">
    <location>
        <begin position="342"/>
        <end position="355"/>
    </location>
</feature>
<feature type="compositionally biased region" description="Basic and acidic residues" evidence="4">
    <location>
        <begin position="398"/>
        <end position="433"/>
    </location>
</feature>
<feature type="compositionally biased region" description="Acidic residues" evidence="4">
    <location>
        <begin position="486"/>
        <end position="498"/>
    </location>
</feature>
<feature type="compositionally biased region" description="Basic and acidic residues" evidence="4">
    <location>
        <begin position="503"/>
        <end position="538"/>
    </location>
</feature>
<feature type="compositionally biased region" description="Basic residues" evidence="4">
    <location>
        <begin position="753"/>
        <end position="767"/>
    </location>
</feature>
<feature type="modified residue" description="Phosphoserine" evidence="9">
    <location>
        <position position="29"/>
    </location>
</feature>
<feature type="modified residue" description="Phosphoserine" evidence="9">
    <location>
        <position position="31"/>
    </location>
</feature>
<feature type="modified residue" description="Phosphoserine" evidence="9">
    <location>
        <position position="37"/>
    </location>
</feature>
<feature type="modified residue" description="Phosphoserine" evidence="2">
    <location>
        <position position="52"/>
    </location>
</feature>
<feature type="modified residue" description="Phosphoserine" evidence="2">
    <location>
        <position position="77"/>
    </location>
</feature>
<feature type="modified residue" description="Phosphoserine" evidence="2">
    <location>
        <position position="81"/>
    </location>
</feature>
<feature type="modified residue" description="Phosphothreonine" evidence="2">
    <location>
        <position position="205"/>
    </location>
</feature>
<feature type="modified residue" description="Citrulline" evidence="6">
    <location>
        <position position="431"/>
    </location>
</feature>
<feature type="modified residue" description="Phosphoserine" evidence="2">
    <location>
        <position position="451"/>
    </location>
</feature>
<feature type="modified residue" description="Citrulline" evidence="6">
    <location>
        <position position="586"/>
    </location>
</feature>
<feature type="cross-link" description="Glycyl lysine isopeptide (Lys-Gly) (interchain with G-Cter in SUMO2)" evidence="2">
    <location>
        <position position="122"/>
    </location>
</feature>
<feature type="cross-link" description="Glycyl lysine isopeptide (Lys-Gly) (interchain with G-Cter in SUMO2)" evidence="2">
    <location>
        <position position="447"/>
    </location>
</feature>
<feature type="cross-link" description="Glycyl lysine isopeptide (Lys-Gly) (interchain with G-Cter in SUMO2)" evidence="2">
    <location>
        <position position="518"/>
    </location>
</feature>
<feature type="splice variant" id="VSP_014477" description="In isoform 2." evidence="7">
    <original>ARTPLEQEVFNLLHK</original>
    <variation>GILQLRDCQNLRRDF</variation>
    <location>
        <begin position="180"/>
        <end position="194"/>
    </location>
</feature>
<feature type="splice variant" id="VSP_014478" description="In isoform 2." evidence="7">
    <location>
        <begin position="195"/>
        <end position="767"/>
    </location>
</feature>
<gene>
    <name type="primary">Utp14a</name>
    <name type="synonym">JsdX</name>
    <name type="synonym">Kiaa0266</name>
</gene>
<proteinExistence type="evidence at protein level"/>
<sequence>MNSIKATKGLLALSQQDDLMDLTSNYPLSASEDEGDSDGERKHQKLLEAIGSLSGKNRWKLPERSEAGLKVSEFNVSSEGSGEKLALSDLLGPLKPSSSLAAVKKQLSRVKSKKTLELPLHKREVEQIHREVAFSKTSQTLSKWDSVVQKNREAEQLVFPLEKEPSSFAPMEHVFREWKARTPLEQEVFNLLHKNKQPVTDPLLTPVEKASLKAMSLEEAKIRRAELQRARALQSYYEARARRMKKIKSKKYHKIVKKGKAKKALKDFEQLRKVDPDAALEELEKMEKARMMERMSLKHQNSGKWAKSKAIMAKYDLEARQAMQEQLAKNKELTQKLQVVSESEEEGGADEEEALVPDIVNEVQKTADGPNPWMLRSCSRDAKENEIQADSEQLPESAAHEFPENEENDKPVAEEDELLKELEKRRSLRKRSELNQAAEPLGNQETKDSTSQEVLSELRALSKKLSKENHLSKKQKKSPAKAVDLVWEEEPAPEEDEPLLLQRPERMRTLEELEELGKEDSLPNKERPRPSVEGEQVRRNPQNHSKGKNKKEQMISLQNLLTTRTPSVTSLALPTTVEELEDEGARDQKQMIKEAFAGDDVIKEFLKEKREAIQANKPKAVDLTLPGWGEWGGMNLKPSARKRRRFLIKAPEGPPRKDKNLPNVIISEKRNIHAAAHQVRVLPYPFTHHQQFERTIQNPIGSTWNTQRAFQKLTAPKVVTKPGHIIKPITAEDVDCRSSPRSDVPVMQSNPKQHSKHQKQRKKSSIG</sequence>
<organism>
    <name type="scientific">Mus musculus</name>
    <name type="common">Mouse</name>
    <dbReference type="NCBI Taxonomy" id="10090"/>
    <lineage>
        <taxon>Eukaryota</taxon>
        <taxon>Metazoa</taxon>
        <taxon>Chordata</taxon>
        <taxon>Craniata</taxon>
        <taxon>Vertebrata</taxon>
        <taxon>Euteleostomi</taxon>
        <taxon>Mammalia</taxon>
        <taxon>Eutheria</taxon>
        <taxon>Euarchontoglires</taxon>
        <taxon>Glires</taxon>
        <taxon>Rodentia</taxon>
        <taxon>Myomorpha</taxon>
        <taxon>Muroidea</taxon>
        <taxon>Muridae</taxon>
        <taxon>Murinae</taxon>
        <taxon>Mus</taxon>
        <taxon>Mus</taxon>
    </lineage>
</organism>
<accession>Q640M1</accession>
<accession>A2AFX7</accession>
<accession>Q6A094</accession>
<accession>Q6EJB4</accession>
<accession>Q6P6L1</accession>
<accession>Q9CZK8</accession>